<proteinExistence type="inferred from homology"/>
<gene>
    <name evidence="1" type="primary">ispE</name>
    <name type="ordered locus">MCA1055</name>
</gene>
<dbReference type="EC" id="2.7.1.148" evidence="1"/>
<dbReference type="EMBL" id="AE017282">
    <property type="protein sequence ID" value="AAU92702.1"/>
    <property type="molecule type" value="Genomic_DNA"/>
</dbReference>
<dbReference type="RefSeq" id="WP_010960355.1">
    <property type="nucleotide sequence ID" value="NC_002977.6"/>
</dbReference>
<dbReference type="SMR" id="Q60A17"/>
<dbReference type="STRING" id="243233.MCA1055"/>
<dbReference type="GeneID" id="88223347"/>
<dbReference type="KEGG" id="mca:MCA1055"/>
<dbReference type="eggNOG" id="COG1947">
    <property type="taxonomic scope" value="Bacteria"/>
</dbReference>
<dbReference type="HOGENOM" id="CLU_053057_3_0_6"/>
<dbReference type="UniPathway" id="UPA00056">
    <property type="reaction ID" value="UER00094"/>
</dbReference>
<dbReference type="Proteomes" id="UP000006821">
    <property type="component" value="Chromosome"/>
</dbReference>
<dbReference type="GO" id="GO:0050515">
    <property type="term" value="F:4-(cytidine 5'-diphospho)-2-C-methyl-D-erythritol kinase activity"/>
    <property type="evidence" value="ECO:0007669"/>
    <property type="project" value="UniProtKB-UniRule"/>
</dbReference>
<dbReference type="GO" id="GO:0005524">
    <property type="term" value="F:ATP binding"/>
    <property type="evidence" value="ECO:0007669"/>
    <property type="project" value="UniProtKB-UniRule"/>
</dbReference>
<dbReference type="GO" id="GO:0019288">
    <property type="term" value="P:isopentenyl diphosphate biosynthetic process, methylerythritol 4-phosphate pathway"/>
    <property type="evidence" value="ECO:0007669"/>
    <property type="project" value="UniProtKB-UniRule"/>
</dbReference>
<dbReference type="GO" id="GO:0016114">
    <property type="term" value="P:terpenoid biosynthetic process"/>
    <property type="evidence" value="ECO:0007669"/>
    <property type="project" value="InterPro"/>
</dbReference>
<dbReference type="Gene3D" id="3.30.230.10">
    <property type="match status" value="1"/>
</dbReference>
<dbReference type="Gene3D" id="3.30.70.890">
    <property type="entry name" value="GHMP kinase, C-terminal domain"/>
    <property type="match status" value="1"/>
</dbReference>
<dbReference type="HAMAP" id="MF_00061">
    <property type="entry name" value="IspE"/>
    <property type="match status" value="1"/>
</dbReference>
<dbReference type="InterPro" id="IPR036554">
    <property type="entry name" value="GHMP_kinase_C_sf"/>
</dbReference>
<dbReference type="InterPro" id="IPR006204">
    <property type="entry name" value="GHMP_kinase_N_dom"/>
</dbReference>
<dbReference type="InterPro" id="IPR004424">
    <property type="entry name" value="IspE"/>
</dbReference>
<dbReference type="InterPro" id="IPR020568">
    <property type="entry name" value="Ribosomal_Su5_D2-typ_SF"/>
</dbReference>
<dbReference type="InterPro" id="IPR014721">
    <property type="entry name" value="Ribsml_uS5_D2-typ_fold_subgr"/>
</dbReference>
<dbReference type="NCBIfam" id="TIGR00154">
    <property type="entry name" value="ispE"/>
    <property type="match status" value="1"/>
</dbReference>
<dbReference type="PANTHER" id="PTHR43527">
    <property type="entry name" value="4-DIPHOSPHOCYTIDYL-2-C-METHYL-D-ERYTHRITOL KINASE, CHLOROPLASTIC"/>
    <property type="match status" value="1"/>
</dbReference>
<dbReference type="PANTHER" id="PTHR43527:SF2">
    <property type="entry name" value="4-DIPHOSPHOCYTIDYL-2-C-METHYL-D-ERYTHRITOL KINASE, CHLOROPLASTIC"/>
    <property type="match status" value="1"/>
</dbReference>
<dbReference type="Pfam" id="PF00288">
    <property type="entry name" value="GHMP_kinases_N"/>
    <property type="match status" value="1"/>
</dbReference>
<dbReference type="PIRSF" id="PIRSF010376">
    <property type="entry name" value="IspE"/>
    <property type="match status" value="1"/>
</dbReference>
<dbReference type="SUPFAM" id="SSF55060">
    <property type="entry name" value="GHMP Kinase, C-terminal domain"/>
    <property type="match status" value="1"/>
</dbReference>
<dbReference type="SUPFAM" id="SSF54211">
    <property type="entry name" value="Ribosomal protein S5 domain 2-like"/>
    <property type="match status" value="1"/>
</dbReference>
<sequence length="291" mass="31638">MDRRESSVMKSPSLRLPAPAKLNLTLRITGRRPDGYHDLQTVFQFVDVCDWLEFRADASGEIRLQTSLAGVPAERNLIVRAARLLKEYAGVAAGADIVLEKNLPMGGGLGGGSSNAATTLVALNRLWDLGLDRQTLMNLGLRLGADVPIFVFGEGAWAEGVGERLQVLELPEPWYVIVVPPCHVSTAEIFNAPDLTRDNDPITIADFLAGSHQNHCLDAVVRRYPVVGEAMCVLGRYSRDVRLTGTGACVYSVHGSEEEAKAACDDLSRDWVAIVASGRNLSPLYEALNER</sequence>
<comment type="function">
    <text evidence="1">Catalyzes the phosphorylation of the position 2 hydroxy group of 4-diphosphocytidyl-2C-methyl-D-erythritol.</text>
</comment>
<comment type="catalytic activity">
    <reaction evidence="1">
        <text>4-CDP-2-C-methyl-D-erythritol + ATP = 4-CDP-2-C-methyl-D-erythritol 2-phosphate + ADP + H(+)</text>
        <dbReference type="Rhea" id="RHEA:18437"/>
        <dbReference type="ChEBI" id="CHEBI:15378"/>
        <dbReference type="ChEBI" id="CHEBI:30616"/>
        <dbReference type="ChEBI" id="CHEBI:57823"/>
        <dbReference type="ChEBI" id="CHEBI:57919"/>
        <dbReference type="ChEBI" id="CHEBI:456216"/>
        <dbReference type="EC" id="2.7.1.148"/>
    </reaction>
</comment>
<comment type="pathway">
    <text evidence="1">Isoprenoid biosynthesis; isopentenyl diphosphate biosynthesis via DXP pathway; isopentenyl diphosphate from 1-deoxy-D-xylulose 5-phosphate: step 3/6.</text>
</comment>
<comment type="similarity">
    <text evidence="1">Belongs to the GHMP kinase family. IspE subfamily.</text>
</comment>
<evidence type="ECO:0000255" key="1">
    <source>
        <dbReference type="HAMAP-Rule" id="MF_00061"/>
    </source>
</evidence>
<reference key="1">
    <citation type="journal article" date="2004" name="PLoS Biol.">
        <title>Genomic insights into methanotrophy: the complete genome sequence of Methylococcus capsulatus (Bath).</title>
        <authorList>
            <person name="Ward N.L."/>
            <person name="Larsen O."/>
            <person name="Sakwa J."/>
            <person name="Bruseth L."/>
            <person name="Khouri H.M."/>
            <person name="Durkin A.S."/>
            <person name="Dimitrov G."/>
            <person name="Jiang L."/>
            <person name="Scanlan D."/>
            <person name="Kang K.H."/>
            <person name="Lewis M.R."/>
            <person name="Nelson K.E."/>
            <person name="Methe B.A."/>
            <person name="Wu M."/>
            <person name="Heidelberg J.F."/>
            <person name="Paulsen I.T."/>
            <person name="Fouts D.E."/>
            <person name="Ravel J."/>
            <person name="Tettelin H."/>
            <person name="Ren Q."/>
            <person name="Read T.D."/>
            <person name="DeBoy R.T."/>
            <person name="Seshadri R."/>
            <person name="Salzberg S.L."/>
            <person name="Jensen H.B."/>
            <person name="Birkeland N.K."/>
            <person name="Nelson W.C."/>
            <person name="Dodson R.J."/>
            <person name="Grindhaug S.H."/>
            <person name="Holt I.E."/>
            <person name="Eidhammer I."/>
            <person name="Jonasen I."/>
            <person name="Vanaken S."/>
            <person name="Utterback T.R."/>
            <person name="Feldblyum T.V."/>
            <person name="Fraser C.M."/>
            <person name="Lillehaug J.R."/>
            <person name="Eisen J.A."/>
        </authorList>
    </citation>
    <scope>NUCLEOTIDE SEQUENCE [LARGE SCALE GENOMIC DNA]</scope>
    <source>
        <strain>ATCC 33009 / NCIMB 11132 / Bath</strain>
    </source>
</reference>
<keyword id="KW-0067">ATP-binding</keyword>
<keyword id="KW-0414">Isoprene biosynthesis</keyword>
<keyword id="KW-0418">Kinase</keyword>
<keyword id="KW-0547">Nucleotide-binding</keyword>
<keyword id="KW-1185">Reference proteome</keyword>
<keyword id="KW-0808">Transferase</keyword>
<protein>
    <recommendedName>
        <fullName evidence="1">4-diphosphocytidyl-2-C-methyl-D-erythritol kinase</fullName>
        <shortName evidence="1">CMK</shortName>
        <ecNumber evidence="1">2.7.1.148</ecNumber>
    </recommendedName>
    <alternativeName>
        <fullName evidence="1">4-(cytidine-5'-diphospho)-2-C-methyl-D-erythritol kinase</fullName>
    </alternativeName>
</protein>
<accession>Q60A17</accession>
<feature type="chain" id="PRO_0000235103" description="4-diphosphocytidyl-2-C-methyl-D-erythritol kinase">
    <location>
        <begin position="1"/>
        <end position="291"/>
    </location>
</feature>
<feature type="active site" evidence="1">
    <location>
        <position position="21"/>
    </location>
</feature>
<feature type="active site" evidence="1">
    <location>
        <position position="146"/>
    </location>
</feature>
<feature type="binding site" evidence="1">
    <location>
        <begin position="104"/>
        <end position="114"/>
    </location>
    <ligand>
        <name>ATP</name>
        <dbReference type="ChEBI" id="CHEBI:30616"/>
    </ligand>
</feature>
<organism>
    <name type="scientific">Methylococcus capsulatus (strain ATCC 33009 / NCIMB 11132 / Bath)</name>
    <dbReference type="NCBI Taxonomy" id="243233"/>
    <lineage>
        <taxon>Bacteria</taxon>
        <taxon>Pseudomonadati</taxon>
        <taxon>Pseudomonadota</taxon>
        <taxon>Gammaproteobacteria</taxon>
        <taxon>Methylococcales</taxon>
        <taxon>Methylococcaceae</taxon>
        <taxon>Methylococcus</taxon>
    </lineage>
</organism>
<name>ISPE_METCA</name>